<reference key="1">
    <citation type="journal article" date="2007" name="Proc. Natl. Acad. Sci. U.S.A.">
        <title>Using plastid genome-scale data to resolve enigmatic relationships among basal angiosperms.</title>
        <authorList>
            <person name="Moore M.J."/>
            <person name="Bell C.D."/>
            <person name="Soltis P.S."/>
            <person name="Soltis D.E."/>
        </authorList>
    </citation>
    <scope>NUCLEOTIDE SEQUENCE [LARGE SCALE GENOMIC DNA]</scope>
</reference>
<evidence type="ECO:0000250" key="1"/>
<evidence type="ECO:0000256" key="2">
    <source>
        <dbReference type="SAM" id="MobiDB-lite"/>
    </source>
</evidence>
<evidence type="ECO:0000305" key="3"/>
<keyword id="KW-0150">Chloroplast</keyword>
<keyword id="KW-0934">Plastid</keyword>
<keyword id="KW-0687">Ribonucleoprotein</keyword>
<keyword id="KW-0689">Ribosomal protein</keyword>
<keyword id="KW-0694">RNA-binding</keyword>
<keyword id="KW-0699">rRNA-binding</keyword>
<gene>
    <name type="primary">rps4</name>
</gene>
<feature type="chain" id="PRO_0000322363" description="Small ribosomal subunit protein uS4c">
    <location>
        <begin position="1"/>
        <end position="201"/>
    </location>
</feature>
<feature type="domain" description="S4 RNA-binding">
    <location>
        <begin position="89"/>
        <end position="150"/>
    </location>
</feature>
<feature type="region of interest" description="Disordered" evidence="2">
    <location>
        <begin position="15"/>
        <end position="43"/>
    </location>
</feature>
<proteinExistence type="inferred from homology"/>
<accession>A8SEA5</accession>
<comment type="function">
    <text evidence="1">One of the primary rRNA binding proteins, it binds directly to 16S rRNA where it nucleates assembly of the body of the 30S subunit.</text>
</comment>
<comment type="function">
    <text evidence="1">With S5 and S12 plays an important role in translational accuracy.</text>
</comment>
<comment type="subunit">
    <text evidence="1">Part of the 30S ribosomal subunit. Contacts protein S5. The interaction surface between S4 and S5 is involved in control of translational fidelity (By similarity).</text>
</comment>
<comment type="subcellular location">
    <subcellularLocation>
        <location>Plastid</location>
        <location>Chloroplast</location>
    </subcellularLocation>
</comment>
<comment type="similarity">
    <text evidence="3">Belongs to the universal ribosomal protein uS4 family.</text>
</comment>
<dbReference type="EMBL" id="EF614270">
    <property type="protein sequence ID" value="ABQ81452.1"/>
    <property type="molecule type" value="Genomic_DNA"/>
</dbReference>
<dbReference type="RefSeq" id="YP_001542449.1">
    <property type="nucleotide sequence ID" value="NC_009962.1"/>
</dbReference>
<dbReference type="SMR" id="A8SEA5"/>
<dbReference type="GeneID" id="5729453"/>
<dbReference type="GO" id="GO:0009507">
    <property type="term" value="C:chloroplast"/>
    <property type="evidence" value="ECO:0007669"/>
    <property type="project" value="UniProtKB-SubCell"/>
</dbReference>
<dbReference type="GO" id="GO:0015935">
    <property type="term" value="C:small ribosomal subunit"/>
    <property type="evidence" value="ECO:0007669"/>
    <property type="project" value="InterPro"/>
</dbReference>
<dbReference type="GO" id="GO:0019843">
    <property type="term" value="F:rRNA binding"/>
    <property type="evidence" value="ECO:0007669"/>
    <property type="project" value="UniProtKB-UniRule"/>
</dbReference>
<dbReference type="GO" id="GO:0003735">
    <property type="term" value="F:structural constituent of ribosome"/>
    <property type="evidence" value="ECO:0007669"/>
    <property type="project" value="InterPro"/>
</dbReference>
<dbReference type="GO" id="GO:0042274">
    <property type="term" value="P:ribosomal small subunit biogenesis"/>
    <property type="evidence" value="ECO:0007669"/>
    <property type="project" value="TreeGrafter"/>
</dbReference>
<dbReference type="GO" id="GO:0006412">
    <property type="term" value="P:translation"/>
    <property type="evidence" value="ECO:0007669"/>
    <property type="project" value="UniProtKB-UniRule"/>
</dbReference>
<dbReference type="CDD" id="cd00165">
    <property type="entry name" value="S4"/>
    <property type="match status" value="1"/>
</dbReference>
<dbReference type="FunFam" id="1.10.1050.10:FF:000002">
    <property type="entry name" value="30S ribosomal protein S4, chloroplastic"/>
    <property type="match status" value="1"/>
</dbReference>
<dbReference type="FunFam" id="3.10.290.10:FF:000081">
    <property type="entry name" value="30S ribosomal protein S4, chloroplastic"/>
    <property type="match status" value="1"/>
</dbReference>
<dbReference type="Gene3D" id="1.10.1050.10">
    <property type="entry name" value="Ribosomal Protein S4 Delta 41, Chain A, domain 1"/>
    <property type="match status" value="1"/>
</dbReference>
<dbReference type="Gene3D" id="3.10.290.10">
    <property type="entry name" value="RNA-binding S4 domain"/>
    <property type="match status" value="1"/>
</dbReference>
<dbReference type="HAMAP" id="MF_01306_B">
    <property type="entry name" value="Ribosomal_uS4_B"/>
    <property type="match status" value="1"/>
</dbReference>
<dbReference type="InterPro" id="IPR022801">
    <property type="entry name" value="Ribosomal_uS4"/>
</dbReference>
<dbReference type="InterPro" id="IPR005709">
    <property type="entry name" value="Ribosomal_uS4_bac-type"/>
</dbReference>
<dbReference type="InterPro" id="IPR018079">
    <property type="entry name" value="Ribosomal_uS4_CS"/>
</dbReference>
<dbReference type="InterPro" id="IPR001912">
    <property type="entry name" value="Ribosomal_uS4_N"/>
</dbReference>
<dbReference type="InterPro" id="IPR002942">
    <property type="entry name" value="S4_RNA-bd"/>
</dbReference>
<dbReference type="InterPro" id="IPR036986">
    <property type="entry name" value="S4_RNA-bd_sf"/>
</dbReference>
<dbReference type="NCBIfam" id="NF003717">
    <property type="entry name" value="PRK05327.1"/>
    <property type="match status" value="1"/>
</dbReference>
<dbReference type="NCBIfam" id="TIGR01017">
    <property type="entry name" value="rpsD_bact"/>
    <property type="match status" value="1"/>
</dbReference>
<dbReference type="PANTHER" id="PTHR11831">
    <property type="entry name" value="30S 40S RIBOSOMAL PROTEIN"/>
    <property type="match status" value="1"/>
</dbReference>
<dbReference type="PANTHER" id="PTHR11831:SF4">
    <property type="entry name" value="SMALL RIBOSOMAL SUBUNIT PROTEIN US4M"/>
    <property type="match status" value="1"/>
</dbReference>
<dbReference type="Pfam" id="PF00163">
    <property type="entry name" value="Ribosomal_S4"/>
    <property type="match status" value="1"/>
</dbReference>
<dbReference type="Pfam" id="PF01479">
    <property type="entry name" value="S4"/>
    <property type="match status" value="1"/>
</dbReference>
<dbReference type="SMART" id="SM01390">
    <property type="entry name" value="Ribosomal_S4"/>
    <property type="match status" value="1"/>
</dbReference>
<dbReference type="SMART" id="SM00363">
    <property type="entry name" value="S4"/>
    <property type="match status" value="1"/>
</dbReference>
<dbReference type="SUPFAM" id="SSF55174">
    <property type="entry name" value="Alpha-L RNA-binding motif"/>
    <property type="match status" value="1"/>
</dbReference>
<dbReference type="PROSITE" id="PS00632">
    <property type="entry name" value="RIBOSOMAL_S4"/>
    <property type="match status" value="1"/>
</dbReference>
<dbReference type="PROSITE" id="PS50889">
    <property type="entry name" value="S4"/>
    <property type="match status" value="1"/>
</dbReference>
<organism>
    <name type="scientific">Ceratophyllum demersum</name>
    <name type="common">Rigid hornwort</name>
    <name type="synonym">Coontail</name>
    <dbReference type="NCBI Taxonomy" id="4428"/>
    <lineage>
        <taxon>Eukaryota</taxon>
        <taxon>Viridiplantae</taxon>
        <taxon>Streptophyta</taxon>
        <taxon>Embryophyta</taxon>
        <taxon>Tracheophyta</taxon>
        <taxon>Spermatophyta</taxon>
        <taxon>Magnoliopsida</taxon>
        <taxon>Ceratophyllales</taxon>
        <taxon>Ceratophyllaceae</taxon>
        <taxon>Ceratophyllum</taxon>
    </lineage>
</organism>
<sequence>MSRYRGPRFKKIRRLGALPGLTSKRPSPGSDLRNQSRSGKRSQYRIRLEEKQKLRFHYGLTERQLLRYVRIAGKAKGSTGQVLLQLLEMRLDNILFRLGMASTIPGARQLVNHRHILVNGRIVDIPSYRCKPQDIITTRDEQRSRALIQKSIDSSPHEEVPKHLTLYPFQYKALVNKIIDSQWIGLKINELLVVEYYSRQT</sequence>
<name>RR4_CERDE</name>
<geneLocation type="chloroplast"/>
<protein>
    <recommendedName>
        <fullName evidence="3">Small ribosomal subunit protein uS4c</fullName>
    </recommendedName>
    <alternativeName>
        <fullName>30S ribosomal protein S4, chloroplastic</fullName>
    </alternativeName>
</protein>